<organism>
    <name type="scientific">Arabidopsis thaliana</name>
    <name type="common">Mouse-ear cress</name>
    <dbReference type="NCBI Taxonomy" id="3702"/>
    <lineage>
        <taxon>Eukaryota</taxon>
        <taxon>Viridiplantae</taxon>
        <taxon>Streptophyta</taxon>
        <taxon>Embryophyta</taxon>
        <taxon>Tracheophyta</taxon>
        <taxon>Spermatophyta</taxon>
        <taxon>Magnoliopsida</taxon>
        <taxon>eudicotyledons</taxon>
        <taxon>Gunneridae</taxon>
        <taxon>Pentapetalae</taxon>
        <taxon>rosids</taxon>
        <taxon>malvids</taxon>
        <taxon>Brassicales</taxon>
        <taxon>Brassicaceae</taxon>
        <taxon>Camelineae</taxon>
        <taxon>Arabidopsis</taxon>
    </lineage>
</organism>
<sequence length="229" mass="24366">MASSSLSPATQLGSSRSALMAMSSGLFVKPTKMNHQMVRKEKIGLRISCQASSIPADRVPDMEKRKTLNLLLLGALSLPTGYMLVPYATFFVPPGTGGGGGGTPAKDALGNDVVAAEWLKTHGPGDRTLTQGLKGDPTYLVVENDKTLATYGINAVCTHLGCVVPWNKAENKFLCPCHGSQYNAQGRVVRGPAPLSLALAHADIDEAGKVLFVPWVETDFRTGDAPWWS</sequence>
<evidence type="ECO:0000250" key="1"/>
<evidence type="ECO:0000255" key="2"/>
<evidence type="ECO:0000255" key="3">
    <source>
        <dbReference type="HAMAP-Rule" id="MF_01335"/>
    </source>
</evidence>
<evidence type="ECO:0000269" key="4">
    <source>
    </source>
</evidence>
<evidence type="ECO:0000269" key="5">
    <source>
    </source>
</evidence>
<evidence type="ECO:0000269" key="6">
    <source>
    </source>
</evidence>
<evidence type="ECO:0000269" key="7">
    <source>
    </source>
</evidence>
<evidence type="ECO:0000269" key="8">
    <source>
    </source>
</evidence>
<evidence type="ECO:0000269" key="9">
    <source>
    </source>
</evidence>
<evidence type="ECO:0000303" key="10">
    <source>
    </source>
</evidence>
<evidence type="ECO:0000303" key="11">
    <source>
    </source>
</evidence>
<evidence type="ECO:0000303" key="12">
    <source>
    </source>
</evidence>
<evidence type="ECO:0000303" key="13">
    <source>
    </source>
</evidence>
<evidence type="ECO:0000303" key="14">
    <source>
    </source>
</evidence>
<evidence type="ECO:0000305" key="15"/>
<evidence type="ECO:0000312" key="16">
    <source>
        <dbReference type="Araport" id="AT4G03280"/>
    </source>
</evidence>
<evidence type="ECO:0000312" key="17">
    <source>
        <dbReference type="EMBL" id="AAD14456.1"/>
    </source>
</evidence>
<evidence type="ECO:0007744" key="18">
    <source>
    </source>
</evidence>
<dbReference type="EC" id="7.1.1.6"/>
<dbReference type="EMBL" id="AJ292972">
    <property type="protein sequence ID" value="CAC03598.1"/>
    <property type="molecule type" value="Genomic_DNA"/>
</dbReference>
<dbReference type="EMBL" id="AJ243702">
    <property type="protein sequence ID" value="CAB52433.1"/>
    <property type="molecule type" value="mRNA"/>
</dbReference>
<dbReference type="EMBL" id="AC005275">
    <property type="protein sequence ID" value="AAD14456.1"/>
    <property type="molecule type" value="Genomic_DNA"/>
</dbReference>
<dbReference type="EMBL" id="AL161496">
    <property type="protein sequence ID" value="CAB77813.1"/>
    <property type="molecule type" value="Genomic_DNA"/>
</dbReference>
<dbReference type="EMBL" id="CP002687">
    <property type="protein sequence ID" value="AEE82301.1"/>
    <property type="molecule type" value="Genomic_DNA"/>
</dbReference>
<dbReference type="EMBL" id="CP002687">
    <property type="protein sequence ID" value="AEE82302.1"/>
    <property type="molecule type" value="Genomic_DNA"/>
</dbReference>
<dbReference type="EMBL" id="AF370566">
    <property type="protein sequence ID" value="AAK49572.1"/>
    <property type="molecule type" value="mRNA"/>
</dbReference>
<dbReference type="EMBL" id="AF410296">
    <property type="protein sequence ID" value="AAK95282.1"/>
    <property type="molecule type" value="mRNA"/>
</dbReference>
<dbReference type="EMBL" id="AY093726">
    <property type="protein sequence ID" value="AAM10350.1"/>
    <property type="molecule type" value="mRNA"/>
</dbReference>
<dbReference type="PIR" id="F85041">
    <property type="entry name" value="F85041"/>
</dbReference>
<dbReference type="PIR" id="PA0041">
    <property type="entry name" value="PA0041"/>
</dbReference>
<dbReference type="RefSeq" id="NP_192237.1">
    <molecule id="Q9ZR03-1"/>
    <property type="nucleotide sequence ID" value="NM_116566.4"/>
</dbReference>
<dbReference type="RefSeq" id="NP_849295.1">
    <molecule id="Q9ZR03-2"/>
    <property type="nucleotide sequence ID" value="NM_178964.2"/>
</dbReference>
<dbReference type="SMR" id="Q9ZR03"/>
<dbReference type="BioGRID" id="13287">
    <property type="interactions" value="5"/>
</dbReference>
<dbReference type="FunCoup" id="Q9ZR03">
    <property type="interactions" value="1304"/>
</dbReference>
<dbReference type="IntAct" id="Q9ZR03">
    <property type="interactions" value="3"/>
</dbReference>
<dbReference type="STRING" id="3702.Q9ZR03"/>
<dbReference type="TCDB" id="3.D.3.5.2">
    <property type="family name" value="the proton-translocating quinol:cytochrome c reductase (qcr) superfamily"/>
</dbReference>
<dbReference type="GlyGen" id="Q9ZR03">
    <property type="glycosylation" value="1 site"/>
</dbReference>
<dbReference type="iPTMnet" id="Q9ZR03"/>
<dbReference type="PaxDb" id="3702-AT4G03280.1"/>
<dbReference type="ProteomicsDB" id="233038">
    <molecule id="Q9ZR03-1"/>
</dbReference>
<dbReference type="EnsemblPlants" id="AT4G03280.1">
    <molecule id="Q9ZR03-1"/>
    <property type="protein sequence ID" value="AT4G03280.1"/>
    <property type="gene ID" value="AT4G03280"/>
</dbReference>
<dbReference type="EnsemblPlants" id="AT4G03280.2">
    <molecule id="Q9ZR03-2"/>
    <property type="protein sequence ID" value="AT4G03280.2"/>
    <property type="gene ID" value="AT4G03280"/>
</dbReference>
<dbReference type="GeneID" id="827996"/>
<dbReference type="Gramene" id="AT4G03280.1">
    <molecule id="Q9ZR03-1"/>
    <property type="protein sequence ID" value="AT4G03280.1"/>
    <property type="gene ID" value="AT4G03280"/>
</dbReference>
<dbReference type="Gramene" id="AT4G03280.2">
    <molecule id="Q9ZR03-2"/>
    <property type="protein sequence ID" value="AT4G03280.2"/>
    <property type="gene ID" value="AT4G03280"/>
</dbReference>
<dbReference type="KEGG" id="ath:AT4G03280"/>
<dbReference type="Araport" id="AT4G03280"/>
<dbReference type="TAIR" id="AT4G03280">
    <property type="gene designation" value="PETC"/>
</dbReference>
<dbReference type="eggNOG" id="KOG1671">
    <property type="taxonomic scope" value="Eukaryota"/>
</dbReference>
<dbReference type="InParanoid" id="Q9ZR03"/>
<dbReference type="PhylomeDB" id="Q9ZR03"/>
<dbReference type="BioCyc" id="ARA:AT4G03280-MONOMER"/>
<dbReference type="CD-CODE" id="4299E36E">
    <property type="entry name" value="Nucleolus"/>
</dbReference>
<dbReference type="PRO" id="PR:Q9ZR03"/>
<dbReference type="Proteomes" id="UP000006548">
    <property type="component" value="Chromosome 4"/>
</dbReference>
<dbReference type="ExpressionAtlas" id="Q9ZR03">
    <property type="expression patterns" value="baseline and differential"/>
</dbReference>
<dbReference type="GO" id="GO:0009507">
    <property type="term" value="C:chloroplast"/>
    <property type="evidence" value="ECO:0007005"/>
    <property type="project" value="TAIR"/>
</dbReference>
<dbReference type="GO" id="GO:0009941">
    <property type="term" value="C:chloroplast envelope"/>
    <property type="evidence" value="ECO:0007005"/>
    <property type="project" value="TAIR"/>
</dbReference>
<dbReference type="GO" id="GO:0009534">
    <property type="term" value="C:chloroplast thylakoid"/>
    <property type="evidence" value="ECO:0007005"/>
    <property type="project" value="TAIR"/>
</dbReference>
<dbReference type="GO" id="GO:0009535">
    <property type="term" value="C:chloroplast thylakoid membrane"/>
    <property type="evidence" value="ECO:0007005"/>
    <property type="project" value="TAIR"/>
</dbReference>
<dbReference type="GO" id="GO:0009512">
    <property type="term" value="C:cytochrome b6f complex"/>
    <property type="evidence" value="ECO:0000304"/>
    <property type="project" value="TAIR"/>
</dbReference>
<dbReference type="GO" id="GO:0005829">
    <property type="term" value="C:cytosol"/>
    <property type="evidence" value="ECO:0007005"/>
    <property type="project" value="TAIR"/>
</dbReference>
<dbReference type="GO" id="GO:0016020">
    <property type="term" value="C:membrane"/>
    <property type="evidence" value="ECO:0007005"/>
    <property type="project" value="TAIR"/>
</dbReference>
<dbReference type="GO" id="GO:0005743">
    <property type="term" value="C:mitochondrial inner membrane"/>
    <property type="evidence" value="ECO:0000314"/>
    <property type="project" value="UniProtKB"/>
</dbReference>
<dbReference type="GO" id="GO:0005886">
    <property type="term" value="C:plasma membrane"/>
    <property type="evidence" value="ECO:0007005"/>
    <property type="project" value="TAIR"/>
</dbReference>
<dbReference type="GO" id="GO:0009579">
    <property type="term" value="C:thylakoid"/>
    <property type="evidence" value="ECO:0007005"/>
    <property type="project" value="TAIR"/>
</dbReference>
<dbReference type="GO" id="GO:0051537">
    <property type="term" value="F:2 iron, 2 sulfur cluster binding"/>
    <property type="evidence" value="ECO:0007669"/>
    <property type="project" value="UniProtKB-KW"/>
</dbReference>
<dbReference type="GO" id="GO:0046028">
    <property type="term" value="F:electron transporter, transferring electrons from cytochrome b6/f complex of photosystem II activity"/>
    <property type="evidence" value="ECO:0000304"/>
    <property type="project" value="TAIR"/>
</dbReference>
<dbReference type="GO" id="GO:0045158">
    <property type="term" value="F:electron transporter, transferring electrons within cytochrome b6/f complex of photosystem II activity"/>
    <property type="evidence" value="ECO:0007669"/>
    <property type="project" value="InterPro"/>
</dbReference>
<dbReference type="GO" id="GO:0046872">
    <property type="term" value="F:metal ion binding"/>
    <property type="evidence" value="ECO:0007669"/>
    <property type="project" value="UniProtKB-KW"/>
</dbReference>
<dbReference type="GO" id="GO:0003729">
    <property type="term" value="F:mRNA binding"/>
    <property type="evidence" value="ECO:0000314"/>
    <property type="project" value="TAIR"/>
</dbReference>
<dbReference type="GO" id="GO:0009496">
    <property type="term" value="F:plastoquinol--plastocyanin reductase activity"/>
    <property type="evidence" value="ECO:0007669"/>
    <property type="project" value="UniProtKB-EC"/>
</dbReference>
<dbReference type="GO" id="GO:0010196">
    <property type="term" value="P:nonphotochemical quenching"/>
    <property type="evidence" value="ECO:0000315"/>
    <property type="project" value="TAIR"/>
</dbReference>
<dbReference type="GO" id="GO:0009767">
    <property type="term" value="P:photosynthetic electron transport chain"/>
    <property type="evidence" value="ECO:0000304"/>
    <property type="project" value="TAIR"/>
</dbReference>
<dbReference type="CDD" id="cd03471">
    <property type="entry name" value="Rieske_cytochrome_b6f"/>
    <property type="match status" value="1"/>
</dbReference>
<dbReference type="FunFam" id="1.20.5.700:FF:000002">
    <property type="entry name" value="Cytochrome b6-f complex iron-sulfur subunit"/>
    <property type="match status" value="1"/>
</dbReference>
<dbReference type="FunFam" id="2.102.10.10:FF:000007">
    <property type="entry name" value="Cytochrome b6-f complex iron-sulfur subunit"/>
    <property type="match status" value="1"/>
</dbReference>
<dbReference type="Gene3D" id="2.102.10.10">
    <property type="entry name" value="Rieske [2Fe-2S] iron-sulphur domain"/>
    <property type="match status" value="1"/>
</dbReference>
<dbReference type="Gene3D" id="1.20.5.700">
    <property type="entry name" value="Single helix bin"/>
    <property type="match status" value="1"/>
</dbReference>
<dbReference type="HAMAP" id="MF_01335">
    <property type="entry name" value="Cytb6_f_Rieske"/>
    <property type="match status" value="1"/>
</dbReference>
<dbReference type="InterPro" id="IPR023960">
    <property type="entry name" value="Cyt_b6_f_Rieske"/>
</dbReference>
<dbReference type="InterPro" id="IPR017941">
    <property type="entry name" value="Rieske_2Fe-2S"/>
</dbReference>
<dbReference type="InterPro" id="IPR036922">
    <property type="entry name" value="Rieske_2Fe-2S_sf"/>
</dbReference>
<dbReference type="InterPro" id="IPR014349">
    <property type="entry name" value="Rieske_Fe-S_prot"/>
</dbReference>
<dbReference type="InterPro" id="IPR005805">
    <property type="entry name" value="Rieske_Fe-S_prot_C"/>
</dbReference>
<dbReference type="NCBIfam" id="NF045928">
    <property type="entry name" value="Cytb6fFeSPetC"/>
    <property type="match status" value="1"/>
</dbReference>
<dbReference type="NCBIfam" id="NF010001">
    <property type="entry name" value="PRK13474.1"/>
    <property type="match status" value="1"/>
</dbReference>
<dbReference type="PANTHER" id="PTHR10134">
    <property type="entry name" value="CYTOCHROME B-C1 COMPLEX SUBUNIT RIESKE, MITOCHONDRIAL"/>
    <property type="match status" value="1"/>
</dbReference>
<dbReference type="Pfam" id="PF00355">
    <property type="entry name" value="Rieske"/>
    <property type="match status" value="1"/>
</dbReference>
<dbReference type="Pfam" id="PF25471">
    <property type="entry name" value="TM_PetC"/>
    <property type="match status" value="1"/>
</dbReference>
<dbReference type="PRINTS" id="PR00162">
    <property type="entry name" value="RIESKE"/>
</dbReference>
<dbReference type="SUPFAM" id="SSF50022">
    <property type="entry name" value="ISP domain"/>
    <property type="match status" value="1"/>
</dbReference>
<dbReference type="PROSITE" id="PS51296">
    <property type="entry name" value="RIESKE"/>
    <property type="match status" value="1"/>
</dbReference>
<reference key="1">
    <citation type="journal article" date="2002" name="Plant Cell Physiol.">
        <title>Tissue-specific, light-regulated and plastid-regulated expression of the single-copy nuclear gene encoding the chloroplast Rieske FeS protein of Arabidopsis thaliana.</title>
        <authorList>
            <person name="Knight J.S."/>
            <person name="Duckett C.M."/>
            <person name="Sullivan J.A."/>
            <person name="Walker A.R."/>
            <person name="Gray J.C."/>
        </authorList>
    </citation>
    <scope>NUCLEOTIDE SEQUENCE [GENOMIC DNA] (ISOFORM 1)</scope>
    <scope>TISSUE SPECIFICITY</scope>
    <scope>INDUCTION</scope>
    <source>
        <strain>cv. Landsberg erecta</strain>
    </source>
</reference>
<reference key="2">
    <citation type="submission" date="1999-08" db="EMBL/GenBank/DDBJ databases">
        <title>Sequences and map position of 31 Arabidopsis thaliana cDNAs encoding organellar polypeptides.</title>
        <authorList>
            <person name="Legen J."/>
            <person name="Misera S."/>
            <person name="Herrmann R.G."/>
            <person name="Altschmied L."/>
        </authorList>
    </citation>
    <scope>NUCLEOTIDE SEQUENCE [MRNA] (ISOFORM 1)</scope>
    <source>
        <strain>cv. Columbia</strain>
    </source>
</reference>
<reference key="3">
    <citation type="journal article" date="1999" name="Nature">
        <title>Sequence and analysis of chromosome 4 of the plant Arabidopsis thaliana.</title>
        <authorList>
            <person name="Mayer K.F.X."/>
            <person name="Schueller C."/>
            <person name="Wambutt R."/>
            <person name="Murphy G."/>
            <person name="Volckaert G."/>
            <person name="Pohl T."/>
            <person name="Duesterhoeft A."/>
            <person name="Stiekema W."/>
            <person name="Entian K.-D."/>
            <person name="Terryn N."/>
            <person name="Harris B."/>
            <person name="Ansorge W."/>
            <person name="Brandt P."/>
            <person name="Grivell L.A."/>
            <person name="Rieger M."/>
            <person name="Weichselgartner M."/>
            <person name="de Simone V."/>
            <person name="Obermaier B."/>
            <person name="Mache R."/>
            <person name="Mueller M."/>
            <person name="Kreis M."/>
            <person name="Delseny M."/>
            <person name="Puigdomenech P."/>
            <person name="Watson M."/>
            <person name="Schmidtheini T."/>
            <person name="Reichert B."/>
            <person name="Portetelle D."/>
            <person name="Perez-Alonso M."/>
            <person name="Boutry M."/>
            <person name="Bancroft I."/>
            <person name="Vos P."/>
            <person name="Hoheisel J."/>
            <person name="Zimmermann W."/>
            <person name="Wedler H."/>
            <person name="Ridley P."/>
            <person name="Langham S.-A."/>
            <person name="McCullagh B."/>
            <person name="Bilham L."/>
            <person name="Robben J."/>
            <person name="van der Schueren J."/>
            <person name="Grymonprez B."/>
            <person name="Chuang Y.-J."/>
            <person name="Vandenbussche F."/>
            <person name="Braeken M."/>
            <person name="Weltjens I."/>
            <person name="Voet M."/>
            <person name="Bastiaens I."/>
            <person name="Aert R."/>
            <person name="Defoor E."/>
            <person name="Weitzenegger T."/>
            <person name="Bothe G."/>
            <person name="Ramsperger U."/>
            <person name="Hilbert H."/>
            <person name="Braun M."/>
            <person name="Holzer E."/>
            <person name="Brandt A."/>
            <person name="Peters S."/>
            <person name="van Staveren M."/>
            <person name="Dirkse W."/>
            <person name="Mooijman P."/>
            <person name="Klein Lankhorst R."/>
            <person name="Rose M."/>
            <person name="Hauf J."/>
            <person name="Koetter P."/>
            <person name="Berneiser S."/>
            <person name="Hempel S."/>
            <person name="Feldpausch M."/>
            <person name="Lamberth S."/>
            <person name="Van den Daele H."/>
            <person name="De Keyser A."/>
            <person name="Buysshaert C."/>
            <person name="Gielen J."/>
            <person name="Villarroel R."/>
            <person name="De Clercq R."/>
            <person name="van Montagu M."/>
            <person name="Rogers J."/>
            <person name="Cronin A."/>
            <person name="Quail M.A."/>
            <person name="Bray-Allen S."/>
            <person name="Clark L."/>
            <person name="Doggett J."/>
            <person name="Hall S."/>
            <person name="Kay M."/>
            <person name="Lennard N."/>
            <person name="McLay K."/>
            <person name="Mayes R."/>
            <person name="Pettett A."/>
            <person name="Rajandream M.A."/>
            <person name="Lyne M."/>
            <person name="Benes V."/>
            <person name="Rechmann S."/>
            <person name="Borkova D."/>
            <person name="Bloecker H."/>
            <person name="Scharfe M."/>
            <person name="Grimm M."/>
            <person name="Loehnert T.-H."/>
            <person name="Dose S."/>
            <person name="de Haan M."/>
            <person name="Maarse A.C."/>
            <person name="Schaefer M."/>
            <person name="Mueller-Auer S."/>
            <person name="Gabel C."/>
            <person name="Fuchs M."/>
            <person name="Fartmann B."/>
            <person name="Granderath K."/>
            <person name="Dauner D."/>
            <person name="Herzl A."/>
            <person name="Neumann S."/>
            <person name="Argiriou A."/>
            <person name="Vitale D."/>
            <person name="Liguori R."/>
            <person name="Piravandi E."/>
            <person name="Massenet O."/>
            <person name="Quigley F."/>
            <person name="Clabauld G."/>
            <person name="Muendlein A."/>
            <person name="Felber R."/>
            <person name="Schnabl S."/>
            <person name="Hiller R."/>
            <person name="Schmidt W."/>
            <person name="Lecharny A."/>
            <person name="Aubourg S."/>
            <person name="Chefdor F."/>
            <person name="Cooke R."/>
            <person name="Berger C."/>
            <person name="Monfort A."/>
            <person name="Casacuberta E."/>
            <person name="Gibbons T."/>
            <person name="Weber N."/>
            <person name="Vandenbol M."/>
            <person name="Bargues M."/>
            <person name="Terol J."/>
            <person name="Torres A."/>
            <person name="Perez-Perez A."/>
            <person name="Purnelle B."/>
            <person name="Bent E."/>
            <person name="Johnson S."/>
            <person name="Tacon D."/>
            <person name="Jesse T."/>
            <person name="Heijnen L."/>
            <person name="Schwarz S."/>
            <person name="Scholler P."/>
            <person name="Heber S."/>
            <person name="Francs P."/>
            <person name="Bielke C."/>
            <person name="Frishman D."/>
            <person name="Haase D."/>
            <person name="Lemcke K."/>
            <person name="Mewes H.-W."/>
            <person name="Stocker S."/>
            <person name="Zaccaria P."/>
            <person name="Bevan M."/>
            <person name="Wilson R.K."/>
            <person name="de la Bastide M."/>
            <person name="Habermann K."/>
            <person name="Parnell L."/>
            <person name="Dedhia N."/>
            <person name="Gnoj L."/>
            <person name="Schutz K."/>
            <person name="Huang E."/>
            <person name="Spiegel L."/>
            <person name="Sekhon M."/>
            <person name="Murray J."/>
            <person name="Sheet P."/>
            <person name="Cordes M."/>
            <person name="Abu-Threideh J."/>
            <person name="Stoneking T."/>
            <person name="Kalicki J."/>
            <person name="Graves T."/>
            <person name="Harmon G."/>
            <person name="Edwards J."/>
            <person name="Latreille P."/>
            <person name="Courtney L."/>
            <person name="Cloud J."/>
            <person name="Abbott A."/>
            <person name="Scott K."/>
            <person name="Johnson D."/>
            <person name="Minx P."/>
            <person name="Bentley D."/>
            <person name="Fulton B."/>
            <person name="Miller N."/>
            <person name="Greco T."/>
            <person name="Kemp K."/>
            <person name="Kramer J."/>
            <person name="Fulton L."/>
            <person name="Mardis E."/>
            <person name="Dante M."/>
            <person name="Pepin K."/>
            <person name="Hillier L.W."/>
            <person name="Nelson J."/>
            <person name="Spieth J."/>
            <person name="Ryan E."/>
            <person name="Andrews S."/>
            <person name="Geisel C."/>
            <person name="Layman D."/>
            <person name="Du H."/>
            <person name="Ali J."/>
            <person name="Berghoff A."/>
            <person name="Jones K."/>
            <person name="Drone K."/>
            <person name="Cotton M."/>
            <person name="Joshu C."/>
            <person name="Antonoiu B."/>
            <person name="Zidanic M."/>
            <person name="Strong C."/>
            <person name="Sun H."/>
            <person name="Lamar B."/>
            <person name="Yordan C."/>
            <person name="Ma P."/>
            <person name="Zhong J."/>
            <person name="Preston R."/>
            <person name="Vil D."/>
            <person name="Shekher M."/>
            <person name="Matero A."/>
            <person name="Shah R."/>
            <person name="Swaby I.K."/>
            <person name="O'Shaughnessy A."/>
            <person name="Rodriguez M."/>
            <person name="Hoffman J."/>
            <person name="Till S."/>
            <person name="Granat S."/>
            <person name="Shohdy N."/>
            <person name="Hasegawa A."/>
            <person name="Hameed A."/>
            <person name="Lodhi M."/>
            <person name="Johnson A."/>
            <person name="Chen E."/>
            <person name="Marra M.A."/>
            <person name="Martienssen R."/>
            <person name="McCombie W.R."/>
        </authorList>
    </citation>
    <scope>NUCLEOTIDE SEQUENCE [LARGE SCALE GENOMIC DNA]</scope>
    <source>
        <strain>cv. Columbia</strain>
    </source>
</reference>
<reference key="4">
    <citation type="journal article" date="2017" name="Plant J.">
        <title>Araport11: a complete reannotation of the Arabidopsis thaliana reference genome.</title>
        <authorList>
            <person name="Cheng C.Y."/>
            <person name="Krishnakumar V."/>
            <person name="Chan A.P."/>
            <person name="Thibaud-Nissen F."/>
            <person name="Schobel S."/>
            <person name="Town C.D."/>
        </authorList>
    </citation>
    <scope>GENOME REANNOTATION</scope>
    <source>
        <strain>cv. Columbia</strain>
    </source>
</reference>
<reference key="5">
    <citation type="journal article" date="2003" name="Science">
        <title>Empirical analysis of transcriptional activity in the Arabidopsis genome.</title>
        <authorList>
            <person name="Yamada K."/>
            <person name="Lim J."/>
            <person name="Dale J.M."/>
            <person name="Chen H."/>
            <person name="Shinn P."/>
            <person name="Palm C.J."/>
            <person name="Southwick A.M."/>
            <person name="Wu H.C."/>
            <person name="Kim C.J."/>
            <person name="Nguyen M."/>
            <person name="Pham P.K."/>
            <person name="Cheuk R.F."/>
            <person name="Karlin-Newmann G."/>
            <person name="Liu S.X."/>
            <person name="Lam B."/>
            <person name="Sakano H."/>
            <person name="Wu T."/>
            <person name="Yu G."/>
            <person name="Miranda M."/>
            <person name="Quach H.L."/>
            <person name="Tripp M."/>
            <person name="Chang C.H."/>
            <person name="Lee J.M."/>
            <person name="Toriumi M.J."/>
            <person name="Chan M.M."/>
            <person name="Tang C.C."/>
            <person name="Onodera C.S."/>
            <person name="Deng J.M."/>
            <person name="Akiyama K."/>
            <person name="Ansari Y."/>
            <person name="Arakawa T."/>
            <person name="Banh J."/>
            <person name="Banno F."/>
            <person name="Bowser L."/>
            <person name="Brooks S.Y."/>
            <person name="Carninci P."/>
            <person name="Chao Q."/>
            <person name="Choy N."/>
            <person name="Enju A."/>
            <person name="Goldsmith A.D."/>
            <person name="Gurjal M."/>
            <person name="Hansen N.F."/>
            <person name="Hayashizaki Y."/>
            <person name="Johnson-Hopson C."/>
            <person name="Hsuan V.W."/>
            <person name="Iida K."/>
            <person name="Karnes M."/>
            <person name="Khan S."/>
            <person name="Koesema E."/>
            <person name="Ishida J."/>
            <person name="Jiang P.X."/>
            <person name="Jones T."/>
            <person name="Kawai J."/>
            <person name="Kamiya A."/>
            <person name="Meyers C."/>
            <person name="Nakajima M."/>
            <person name="Narusaka M."/>
            <person name="Seki M."/>
            <person name="Sakurai T."/>
            <person name="Satou M."/>
            <person name="Tamse R."/>
            <person name="Vaysberg M."/>
            <person name="Wallender E.K."/>
            <person name="Wong C."/>
            <person name="Yamamura Y."/>
            <person name="Yuan S."/>
            <person name="Shinozaki K."/>
            <person name="Davis R.W."/>
            <person name="Theologis A."/>
            <person name="Ecker J.R."/>
        </authorList>
    </citation>
    <scope>NUCLEOTIDE SEQUENCE [LARGE SCALE MRNA] (ISOFORMS 1 AND 2)</scope>
    <source>
        <strain>cv. Columbia</strain>
    </source>
</reference>
<reference key="6">
    <citation type="journal article" date="2001" name="Plant J.">
        <title>Cytochrome b6/f mutation specifically affects thermal dissipation of absorbed light energy in Arabidopsis.</title>
        <authorList>
            <person name="Munekage Y."/>
            <person name="Takeda S."/>
            <person name="Endo T."/>
            <person name="Jahns P."/>
            <person name="Hashimoto T."/>
            <person name="Shikanai T."/>
        </authorList>
    </citation>
    <scope>FUNCTION</scope>
    <scope>MUTAGENESIS OF PRO-194</scope>
</reference>
<reference key="7">
    <citation type="journal article" date="2002" name="FEBS Lett.">
        <title>Single point mutation in the Rieske iron-sulfur subunit of cytochrome b6/f leads to an altered pH dependence of plastoquinol oxidation in Arabidopsis.</title>
        <authorList>
            <person name="Jahns P."/>
            <person name="Graf M."/>
            <person name="Munekage Y."/>
            <person name="Shikanai T."/>
        </authorList>
    </citation>
    <scope>FUNCTION</scope>
    <scope>INDUCTION</scope>
    <scope>MUTAGENESIS OF PRO-194</scope>
</reference>
<reference key="8">
    <citation type="journal article" date="2003" name="Plant Physiol.">
        <title>Knock-out of the genes coding for the Rieske protein and the ATP-synthase delta-subunit of Arabidopsis. Effects on photosynthesis, thylakoid protein composition, and nuclear chloroplast gene expression.</title>
        <authorList>
            <person name="Maiwald D."/>
            <person name="Dietzmann A."/>
            <person name="Jahns P."/>
            <person name="Pesaresi P."/>
            <person name="Joliot P."/>
            <person name="Joliot A."/>
            <person name="Levin J.Z."/>
            <person name="Salamini F."/>
            <person name="Leister D."/>
        </authorList>
    </citation>
    <scope>FUNCTION</scope>
</reference>
<reference key="9">
    <citation type="journal article" date="2012" name="J. Proteome Res.">
        <title>Identification of phosphoproteins in Arabidopsis thaliana leaves using polyethylene glycol fractionation, immobilized metal-ion affinity chromatography, two-dimensional gel electrophoresis and mass spectrometry.</title>
        <authorList>
            <person name="Aryal U.K."/>
            <person name="Krochko J.E."/>
            <person name="Ross A.R."/>
        </authorList>
    </citation>
    <scope>PHOSPHORYLATION [LARGE SCALE ANALYSIS] AT SER-196</scope>
    <scope>IDENTIFICATION BY MASS SPECTROMETRY [LARGE SCALE ANALYSIS]</scope>
</reference>
<reference key="10">
    <citation type="journal article" date="2013" name="Mol. Cell">
        <title>PGRL1 is the elusive ferredoxin-plastoquinone reductase in photosynthetic cyclic electron flow.</title>
        <authorList>
            <person name="Hertle A.P."/>
            <person name="Blunder T."/>
            <person name="Wunder T."/>
            <person name="Pesaresi P."/>
            <person name="Pribil M."/>
            <person name="Armbruster U."/>
            <person name="Leister D."/>
        </authorList>
    </citation>
    <scope>INTERACTION WITH PGRL1A</scope>
</reference>
<reference key="11">
    <citation type="journal article" date="2019" name="Plant Cell">
        <title>Arabidopsis DGD1 SUPPRESSOR1 is a subunit of the mitochondrial contact site and cristae organizing system and affects mitochondrial biogenesis.</title>
        <authorList>
            <person name="Li L."/>
            <person name="Lavell A."/>
            <person name="Meng X."/>
            <person name="Berkowitz O."/>
            <person name="Selinski J."/>
            <person name="van de Meene A."/>
            <person name="Carrie C."/>
            <person name="Benning C."/>
            <person name="Whelan J."/>
            <person name="De Clercq I."/>
            <person name="Wang Y."/>
        </authorList>
    </citation>
    <scope>SUBUNIT</scope>
    <scope>SUBCELLULAR LOCATION</scope>
    <source>
        <strain>cv. Columbia</strain>
    </source>
</reference>
<protein>
    <recommendedName>
        <fullName evidence="10">Cytochrome b6-f complex iron-sulfur subunit, chloroplastic</fullName>
        <ecNumber>7.1.1.6</ecNumber>
    </recommendedName>
    <alternativeName>
        <fullName evidence="11">Plastohydroquinone:plastocyanin oxidoreductase iron-sulfur protein</fullName>
    </alternativeName>
    <alternativeName>
        <fullName evidence="10">Proton gradient regulation protein 1</fullName>
    </alternativeName>
    <alternativeName>
        <fullName evidence="14">Rieske iron-sulfur protein</fullName>
        <shortName evidence="14">ISP</shortName>
        <shortName evidence="14">RISP</shortName>
    </alternativeName>
</protein>
<accession>Q9ZR03</accession>
<accession>Q94EI4</accession>
<accession>Q9FYB6</accession>
<name>UCRIA_ARATH</name>
<gene>
    <name evidence="12" type="primary">petC</name>
    <name evidence="10" type="synonym">PGR1</name>
    <name evidence="14" type="synonym">RISP</name>
    <name evidence="16" type="ordered locus">At4g03280</name>
    <name evidence="17" type="ORF">F4C21.21</name>
</gene>
<proteinExistence type="evidence at protein level"/>
<comment type="function">
    <text evidence="1 4 5 7">Essential protein for photoautotrophism. Confers resistance to photo-oxidative damages by contributing to the thermal dissipation of light energy and to lumenal acidification (increase of pH gradient). Component of the cytochrome b6-f complex, which mediates electron transfer between photosystem II (PSII) and photosystem I (PSI), cyclic electron flow around PSI, and state transitions (By similarity).</text>
</comment>
<comment type="catalytic activity">
    <reaction>
        <text>2 oxidized [plastocyanin] + a plastoquinol + 2 H(+)(in) = 2 reduced [plastocyanin] + a plastoquinone + 4 H(+)(out)</text>
        <dbReference type="Rhea" id="RHEA:22148"/>
        <dbReference type="Rhea" id="RHEA-COMP:9561"/>
        <dbReference type="Rhea" id="RHEA-COMP:9562"/>
        <dbReference type="Rhea" id="RHEA-COMP:10039"/>
        <dbReference type="Rhea" id="RHEA-COMP:10040"/>
        <dbReference type="ChEBI" id="CHEBI:15378"/>
        <dbReference type="ChEBI" id="CHEBI:17757"/>
        <dbReference type="ChEBI" id="CHEBI:29036"/>
        <dbReference type="ChEBI" id="CHEBI:49552"/>
        <dbReference type="ChEBI" id="CHEBI:62192"/>
        <dbReference type="EC" id="7.1.1.6"/>
    </reaction>
</comment>
<comment type="cofactor">
    <cofactor evidence="1">
        <name>[2Fe-2S] cluster</name>
        <dbReference type="ChEBI" id="CHEBI:190135"/>
    </cofactor>
    <text evidence="1">Binds 1 [2Fe-2S] cluster per subunit.</text>
</comment>
<comment type="subunit">
    <text evidence="1 8 9">The 4 large subunits of the cytochrome b6-f complex are cytochrome b6, subunit IV (17 kDa polypeptide, petD), cytochrome f and the Rieske protein, while the 4 small subunits are petG, petL, petM and petN. The complex functions as a dimer (By similarity). Interacts with PGRL1A (PubMed:23290914). Component of a mitochondrial large protein complex that contains, at least, MIC60, DGS1, TOM40, TOM20 proteins, and petC/RISP (PubMed:31118221).</text>
</comment>
<comment type="interaction">
    <interactant intactId="EBI-2436968">
        <id>Q9ZR03</id>
    </interactant>
    <interactant intactId="EBI-2436954">
        <id>Q9SCY3</id>
        <label>PNSL4</label>
    </interactant>
    <organismsDiffer>false</organismsDiffer>
    <experiments>3</experiments>
</comment>
<comment type="subcellular location">
    <subcellularLocation>
        <location evidence="1">Plastid</location>
        <location evidence="1">Chloroplast thylakoid membrane</location>
        <topology evidence="2">Single-pass membrane protein</topology>
    </subcellularLocation>
    <subcellularLocation>
        <location evidence="9">Mitochondrion inner membrane</location>
        <topology evidence="2">Single-pass membrane protein</topology>
    </subcellularLocation>
    <text evidence="1">The transmembrane helix obliquely spans the membrane in one monomer, and its extrinsic C-terminal domain is part of the other monomer.</text>
</comment>
<comment type="alternative products">
    <event type="alternative splicing"/>
    <isoform>
        <id>Q9ZR03-1</id>
        <name>1</name>
        <sequence type="displayed"/>
    </isoform>
    <isoform>
        <id>Q9ZR03-2</id>
        <name>2</name>
        <sequence type="described" ref="VSP_015096"/>
    </isoform>
</comment>
<comment type="tissue specificity">
    <text evidence="6">Confined to photosynthetic tissues, with highest levels in flowers. In leaves, mostly localized in mesophyll cells. In stems, confined to the peripheral ring of chlorenchyma and adjoining groups of cells associated with the vascular bundles. In siliques, present in green wall of the fruit and in peduncle but not in the translucide white septum of the seeds.</text>
</comment>
<comment type="induction">
    <text evidence="5 6">Light-dependent expression. Inhibited by acidification of thylakoids (below pH 5), sucrose and norflurazon (caroteonid synthesis inhibitor leading to photobleaching).</text>
</comment>
<comment type="miscellaneous">
    <text>This protein is 1 of 2 subunits of the cytochrome b6-f complex that are encoded in the nucleus.</text>
</comment>
<comment type="miscellaneous">
    <text>The Rieske iron-sulfur protein is a high potential 2Fe-2S protein.</text>
</comment>
<comment type="miscellaneous">
    <molecule>Isoform 2</molecule>
    <text evidence="15">May be due to an intron retention.</text>
</comment>
<comment type="similarity">
    <text evidence="3">Belongs to the Rieske iron-sulfur protein family.</text>
</comment>
<feature type="transit peptide" description="Chloroplast" evidence="2">
    <location>
        <begin position="1"/>
        <end position="50"/>
    </location>
</feature>
<feature type="chain" id="PRO_0000030684" description="Cytochrome b6-f complex iron-sulfur subunit, chloroplastic">
    <location>
        <begin position="51"/>
        <end position="229"/>
    </location>
</feature>
<feature type="transmembrane region" description="Helical" evidence="2">
    <location>
        <begin position="68"/>
        <end position="90"/>
    </location>
</feature>
<feature type="domain" description="Rieske">
    <location>
        <begin position="115"/>
        <end position="211"/>
    </location>
</feature>
<feature type="binding site" evidence="1">
    <location>
        <position position="157"/>
    </location>
    <ligand>
        <name>[2Fe-2S] cluster</name>
        <dbReference type="ChEBI" id="CHEBI:190135"/>
    </ligand>
</feature>
<feature type="binding site" evidence="1">
    <location>
        <position position="159"/>
    </location>
    <ligand>
        <name>[2Fe-2S] cluster</name>
        <dbReference type="ChEBI" id="CHEBI:190135"/>
    </ligand>
</feature>
<feature type="binding site" evidence="1">
    <location>
        <position position="175"/>
    </location>
    <ligand>
        <name>[2Fe-2S] cluster</name>
        <dbReference type="ChEBI" id="CHEBI:190135"/>
    </ligand>
</feature>
<feature type="binding site" evidence="1">
    <location>
        <position position="178"/>
    </location>
    <ligand>
        <name>[2Fe-2S] cluster</name>
        <dbReference type="ChEBI" id="CHEBI:190135"/>
    </ligand>
</feature>
<feature type="modified residue" description="Phosphoserine" evidence="18">
    <location>
        <position position="196"/>
    </location>
</feature>
<feature type="disulfide bond" evidence="1">
    <location>
        <begin position="162"/>
        <end position="177"/>
    </location>
</feature>
<feature type="splice variant" id="VSP_015096" description="In isoform 2." evidence="13">
    <location>
        <begin position="1"/>
        <end position="19"/>
    </location>
</feature>
<feature type="mutagenesis site" description="In pgr1; reduces electron transfer from cyt b6/f to photosystem I at high light intensity, and shifts pH-dependent inactivation of electron transport to more alkaline pH." evidence="4 5">
    <original>P</original>
    <variation>L</variation>
    <location>
        <position position="194"/>
    </location>
</feature>
<feature type="sequence conflict" description="In Ref. 2; CAC03598." evidence="15" ref="2">
    <original>S</original>
    <variation>A</variation>
    <location>
        <position position="48"/>
    </location>
</feature>
<keyword id="KW-0001">2Fe-2S</keyword>
<keyword id="KW-0025">Alternative splicing</keyword>
<keyword id="KW-0150">Chloroplast</keyword>
<keyword id="KW-1015">Disulfide bond</keyword>
<keyword id="KW-0249">Electron transport</keyword>
<keyword id="KW-0408">Iron</keyword>
<keyword id="KW-0411">Iron-sulfur</keyword>
<keyword id="KW-0472">Membrane</keyword>
<keyword id="KW-0479">Metal-binding</keyword>
<keyword id="KW-0496">Mitochondrion</keyword>
<keyword id="KW-0999">Mitochondrion inner membrane</keyword>
<keyword id="KW-0597">Phosphoprotein</keyword>
<keyword id="KW-0934">Plastid</keyword>
<keyword id="KW-1185">Reference proteome</keyword>
<keyword id="KW-0793">Thylakoid</keyword>
<keyword id="KW-0809">Transit peptide</keyword>
<keyword id="KW-1278">Translocase</keyword>
<keyword id="KW-0812">Transmembrane</keyword>
<keyword id="KW-1133">Transmembrane helix</keyword>
<keyword id="KW-0813">Transport</keyword>